<gene>
    <name type="primary">fut10</name>
    <name evidence="2" type="synonym">pofut3</name>
</gene>
<sequence length="469" mass="55051">MVNRIWEKRFWISCFFIIFLFILVIFQVMVELGRFEKKETKSSTVINIQKQKKPLLKEQSNSRLRHFKDNYPIMLWWSPLTGENGRLGQCGTDTCFFTINRTYLQDPMTKAILFYGTDFNIDSLPLPRKSSHEWALFHEESPKNNYKLFHEPAITLFNHTATFSRHSHMPLTSQYLEGLQALKSTDYLVSVEKKNVLRKRLSPLAYVQSDCDPPSDRDTYVQELMKYIAVDSYGECLHNKDLPQQVNNPSFMDDSQFHHILGQYKFILAFENAVCEDYITEKLWRPLKLGAVPVYFGAPNVEDWLPSNKSAIIVSRFSHPKDLAAYIKKLDKNDTLYMQFIEWKLHGNINNKRLVSAITERKWGVQDVTQDNYIDAFECMVCKRVCENVRLKEQGPSTKLWNADSAHLNCPAPEVFSFLPVHSPKSSMREMWKPSFEQSKKEAKALRTLVERNRNFTTVEFWNLVFKFW</sequence>
<reference key="1">
    <citation type="submission" date="2004-04" db="EMBL/GenBank/DDBJ databases">
        <authorList>
            <consortium name="NIH - Xenopus Gene Collection (XGC) project"/>
        </authorList>
    </citation>
    <scope>NUCLEOTIDE SEQUENCE [LARGE SCALE MRNA]</scope>
    <source>
        <tissue>Embryo</tissue>
    </source>
</reference>
<comment type="function">
    <text evidence="2">Protein O-fucosyltransferase that specifically catalyzes O-fucosylation of serine or threonine residues in EMI domains of target proteins. Attaches fucose through an O-glycosidic linkage. O-fucosylation of EMI domain-containing proteins may be required for facilitating protein folding and secretion.</text>
</comment>
<comment type="catalytic activity">
    <reaction evidence="2">
        <text>L-threonyl-[protein] + GDP-beta-L-fucose = 3-O-(alpha-L-fucosyl)-L-threonyl-[protein] + GDP + H(+)</text>
        <dbReference type="Rhea" id="RHEA:70491"/>
        <dbReference type="Rhea" id="RHEA-COMP:11060"/>
        <dbReference type="Rhea" id="RHEA-COMP:17915"/>
        <dbReference type="ChEBI" id="CHEBI:15378"/>
        <dbReference type="ChEBI" id="CHEBI:30013"/>
        <dbReference type="ChEBI" id="CHEBI:57273"/>
        <dbReference type="ChEBI" id="CHEBI:58189"/>
        <dbReference type="ChEBI" id="CHEBI:189631"/>
        <dbReference type="EC" id="2.4.1.221"/>
    </reaction>
    <physiologicalReaction direction="left-to-right" evidence="2">
        <dbReference type="Rhea" id="RHEA:70492"/>
    </physiologicalReaction>
</comment>
<comment type="catalytic activity">
    <reaction evidence="2">
        <text>L-seryl-[protein] + GDP-beta-L-fucose = 3-O-(alpha-L-fucosyl)-L-seryl-[protein] + GDP + H(+)</text>
        <dbReference type="Rhea" id="RHEA:63644"/>
        <dbReference type="Rhea" id="RHEA-COMP:9863"/>
        <dbReference type="Rhea" id="RHEA-COMP:17914"/>
        <dbReference type="ChEBI" id="CHEBI:15378"/>
        <dbReference type="ChEBI" id="CHEBI:29999"/>
        <dbReference type="ChEBI" id="CHEBI:57273"/>
        <dbReference type="ChEBI" id="CHEBI:58189"/>
        <dbReference type="ChEBI" id="CHEBI:189632"/>
        <dbReference type="EC" id="2.4.1.221"/>
    </reaction>
    <physiologicalReaction direction="left-to-right" evidence="2">
        <dbReference type="Rhea" id="RHEA:63645"/>
    </physiologicalReaction>
</comment>
<comment type="pathway">
    <text evidence="2">Protein modification; protein glycosylation.</text>
</comment>
<comment type="subcellular location">
    <subcellularLocation>
        <location evidence="2">Endoplasmic reticulum membrane</location>
        <topology evidence="3">Single-pass type II membrane protein</topology>
    </subcellularLocation>
</comment>
<comment type="similarity">
    <text evidence="4">Belongs to the glycosyltransferase 10 family.</text>
</comment>
<comment type="sequence caution" evidence="4">
    <conflict type="erroneous initiation">
        <sequence resource="EMBL-CDS" id="AAH68806"/>
    </conflict>
</comment>
<accession>Q6NTZ6</accession>
<name>OFUT3_XENLA</name>
<dbReference type="EC" id="2.4.1.221" evidence="2"/>
<dbReference type="EMBL" id="BC068806">
    <property type="protein sequence ID" value="AAH68806.1"/>
    <property type="status" value="ALT_INIT"/>
    <property type="molecule type" value="mRNA"/>
</dbReference>
<dbReference type="RefSeq" id="NP_001084663.1">
    <property type="nucleotide sequence ID" value="NM_001091194.1"/>
</dbReference>
<dbReference type="SMR" id="Q6NTZ6"/>
<dbReference type="CAZy" id="GT10">
    <property type="family name" value="Glycosyltransferase Family 10"/>
</dbReference>
<dbReference type="GlyCosmos" id="Q6NTZ6">
    <property type="glycosylation" value="5 sites, No reported glycans"/>
</dbReference>
<dbReference type="DNASU" id="414623"/>
<dbReference type="AGR" id="Xenbase:XB-GENE-976925"/>
<dbReference type="Xenbase" id="XB-GENE-976925">
    <property type="gene designation" value="fut10.L"/>
</dbReference>
<dbReference type="UniPathway" id="UPA00378"/>
<dbReference type="Proteomes" id="UP000186698">
    <property type="component" value="Unplaced"/>
</dbReference>
<dbReference type="Bgee" id="414623">
    <property type="expression patterns" value="Expressed in muscle tissue and 18 other cell types or tissues"/>
</dbReference>
<dbReference type="GO" id="GO:0005783">
    <property type="term" value="C:endoplasmic reticulum"/>
    <property type="evidence" value="ECO:0000250"/>
    <property type="project" value="UniProtKB"/>
</dbReference>
<dbReference type="GO" id="GO:0005789">
    <property type="term" value="C:endoplasmic reticulum membrane"/>
    <property type="evidence" value="ECO:0007669"/>
    <property type="project" value="UniProtKB-SubCell"/>
</dbReference>
<dbReference type="GO" id="GO:0000139">
    <property type="term" value="C:Golgi membrane"/>
    <property type="evidence" value="ECO:0007669"/>
    <property type="project" value="InterPro"/>
</dbReference>
<dbReference type="GO" id="GO:0046920">
    <property type="term" value="F:alpha-(1-&gt;3)-fucosyltransferase activity"/>
    <property type="evidence" value="ECO:0000318"/>
    <property type="project" value="GO_Central"/>
</dbReference>
<dbReference type="GO" id="GO:0046922">
    <property type="term" value="F:peptide-O-fucosyltransferase activity"/>
    <property type="evidence" value="ECO:0000250"/>
    <property type="project" value="UniProtKB"/>
</dbReference>
<dbReference type="GO" id="GO:0036065">
    <property type="term" value="P:fucosylation"/>
    <property type="evidence" value="ECO:0000318"/>
    <property type="project" value="GO_Central"/>
</dbReference>
<dbReference type="GO" id="GO:0050714">
    <property type="term" value="P:positive regulation of protein secretion"/>
    <property type="evidence" value="ECO:0000250"/>
    <property type="project" value="UniProtKB"/>
</dbReference>
<dbReference type="FunFam" id="3.40.50.11660:FF:000002">
    <property type="entry name" value="Alpha-(1,3)-fucosyltransferase"/>
    <property type="match status" value="1"/>
</dbReference>
<dbReference type="Gene3D" id="3.40.50.11660">
    <property type="entry name" value="Glycosyl transferase family 10, C-terminal domain"/>
    <property type="match status" value="1"/>
</dbReference>
<dbReference type="InterPro" id="IPR017176">
    <property type="entry name" value="Alpha-1_3-FUT_met"/>
</dbReference>
<dbReference type="InterPro" id="IPR055270">
    <property type="entry name" value="Glyco_tran_10_C"/>
</dbReference>
<dbReference type="InterPro" id="IPR031481">
    <property type="entry name" value="Glyco_tran_10_N"/>
</dbReference>
<dbReference type="InterPro" id="IPR001503">
    <property type="entry name" value="Glyco_trans_10"/>
</dbReference>
<dbReference type="InterPro" id="IPR038577">
    <property type="entry name" value="GT10-like_C_sf"/>
</dbReference>
<dbReference type="PANTHER" id="PTHR11929">
    <property type="entry name" value="ALPHA- 1,3 -FUCOSYLTRANSFERASE"/>
    <property type="match status" value="1"/>
</dbReference>
<dbReference type="PANTHER" id="PTHR11929:SF194">
    <property type="entry name" value="ALPHA-(1,3)-FUCOSYLTRANSFERASE 10"/>
    <property type="match status" value="1"/>
</dbReference>
<dbReference type="Pfam" id="PF17039">
    <property type="entry name" value="Glyco_tran_10_N"/>
    <property type="match status" value="1"/>
</dbReference>
<dbReference type="Pfam" id="PF00852">
    <property type="entry name" value="Glyco_transf_10"/>
    <property type="match status" value="1"/>
</dbReference>
<dbReference type="PIRSF" id="PIRSF037332">
    <property type="entry name" value="Alpha1_3FUT_met"/>
    <property type="match status" value="1"/>
</dbReference>
<dbReference type="SUPFAM" id="SSF53756">
    <property type="entry name" value="UDP-Glycosyltransferase/glycogen phosphorylase"/>
    <property type="match status" value="1"/>
</dbReference>
<protein>
    <recommendedName>
        <fullName>GDP-fucose protein O-fucosyltransferase 3</fullName>
        <ecNumber evidence="2">2.4.1.221</ecNumber>
    </recommendedName>
    <alternativeName>
        <fullName>Fucosyltransferase X</fullName>
        <shortName>Fuc-TX</shortName>
        <shortName>FucT-X</shortName>
    </alternativeName>
    <alternativeName>
        <fullName>Galactoside 3-L-fucosyltransferase 10</fullName>
        <shortName>Fucosyltransferase 10</shortName>
    </alternativeName>
</protein>
<evidence type="ECO:0000250" key="1">
    <source>
        <dbReference type="UniProtKB" id="Q11130"/>
    </source>
</evidence>
<evidence type="ECO:0000250" key="2">
    <source>
        <dbReference type="UniProtKB" id="Q6P4F1"/>
    </source>
</evidence>
<evidence type="ECO:0000255" key="3"/>
<evidence type="ECO:0000305" key="4"/>
<keyword id="KW-1015">Disulfide bond</keyword>
<keyword id="KW-0256">Endoplasmic reticulum</keyword>
<keyword id="KW-0325">Glycoprotein</keyword>
<keyword id="KW-0328">Glycosyltransferase</keyword>
<keyword id="KW-0472">Membrane</keyword>
<keyword id="KW-1185">Reference proteome</keyword>
<keyword id="KW-0735">Signal-anchor</keyword>
<keyword id="KW-0808">Transferase</keyword>
<keyword id="KW-0812">Transmembrane</keyword>
<keyword id="KW-1133">Transmembrane helix</keyword>
<organism>
    <name type="scientific">Xenopus laevis</name>
    <name type="common">African clawed frog</name>
    <dbReference type="NCBI Taxonomy" id="8355"/>
    <lineage>
        <taxon>Eukaryota</taxon>
        <taxon>Metazoa</taxon>
        <taxon>Chordata</taxon>
        <taxon>Craniata</taxon>
        <taxon>Vertebrata</taxon>
        <taxon>Euteleostomi</taxon>
        <taxon>Amphibia</taxon>
        <taxon>Batrachia</taxon>
        <taxon>Anura</taxon>
        <taxon>Pipoidea</taxon>
        <taxon>Pipidae</taxon>
        <taxon>Xenopodinae</taxon>
        <taxon>Xenopus</taxon>
        <taxon>Xenopus</taxon>
    </lineage>
</organism>
<proteinExistence type="evidence at transcript level"/>
<feature type="chain" id="PRO_0000299007" description="GDP-fucose protein O-fucosyltransferase 3">
    <location>
        <begin position="1"/>
        <end position="469"/>
    </location>
</feature>
<feature type="topological domain" description="Cytoplasmic" evidence="3">
    <location>
        <begin position="1"/>
        <end position="9"/>
    </location>
</feature>
<feature type="transmembrane region" description="Helical; Signal-anchor for type II membrane protein" evidence="3">
    <location>
        <begin position="10"/>
        <end position="30"/>
    </location>
</feature>
<feature type="topological domain" description="Lumenal" evidence="3">
    <location>
        <begin position="31"/>
        <end position="469"/>
    </location>
</feature>
<feature type="glycosylation site" description="N-linked (GlcNAc...) asparagine" evidence="3">
    <location>
        <position position="100"/>
    </location>
</feature>
<feature type="glycosylation site" description="N-linked (GlcNAc...) asparagine" evidence="3">
    <location>
        <position position="158"/>
    </location>
</feature>
<feature type="glycosylation site" description="N-linked (GlcNAc...) asparagine" evidence="3">
    <location>
        <position position="308"/>
    </location>
</feature>
<feature type="glycosylation site" description="N-linked (GlcNAc...) asparagine" evidence="3">
    <location>
        <position position="333"/>
    </location>
</feature>
<feature type="glycosylation site" description="N-linked (GlcNAc...) asparagine" evidence="3">
    <location>
        <position position="455"/>
    </location>
</feature>
<feature type="disulfide bond" evidence="1">
    <location>
        <begin position="379"/>
        <end position="382"/>
    </location>
</feature>